<protein>
    <recommendedName>
        <fullName evidence="1">ATP synthase subunit beta</fullName>
        <ecNumber evidence="1">7.1.2.2</ecNumber>
    </recommendedName>
    <alternativeName>
        <fullName evidence="1">ATP synthase F1 sector subunit beta</fullName>
    </alternativeName>
    <alternativeName>
        <fullName evidence="1">F-ATPase subunit beta</fullName>
    </alternativeName>
</protein>
<accession>Q2JIV9</accession>
<comment type="function">
    <text evidence="1">Produces ATP from ADP in the presence of a proton gradient across the membrane. The catalytic sites are hosted primarily by the beta subunits.</text>
</comment>
<comment type="catalytic activity">
    <reaction evidence="1">
        <text>ATP + H2O + 4 H(+)(in) = ADP + phosphate + 5 H(+)(out)</text>
        <dbReference type="Rhea" id="RHEA:57720"/>
        <dbReference type="ChEBI" id="CHEBI:15377"/>
        <dbReference type="ChEBI" id="CHEBI:15378"/>
        <dbReference type="ChEBI" id="CHEBI:30616"/>
        <dbReference type="ChEBI" id="CHEBI:43474"/>
        <dbReference type="ChEBI" id="CHEBI:456216"/>
        <dbReference type="EC" id="7.1.2.2"/>
    </reaction>
</comment>
<comment type="subunit">
    <text evidence="1">F-type ATPases have 2 components, CF(1) - the catalytic core - and CF(0) - the membrane proton channel. CF(1) has five subunits: alpha(3), beta(3), gamma(1), delta(1), epsilon(1). CF(0) has four main subunits: a(1), b(1), b'(1) and c(9-12).</text>
</comment>
<comment type="subcellular location">
    <subcellularLocation>
        <location evidence="1">Cellular thylakoid membrane</location>
        <topology evidence="1">Peripheral membrane protein</topology>
    </subcellularLocation>
</comment>
<comment type="similarity">
    <text evidence="1">Belongs to the ATPase alpha/beta chains family.</text>
</comment>
<sequence>MVTATATATNVGYITQVIGPVIDAEFPSGKLPEIYNALKVEGTTESGLKVNVTFEVQQLLGDNRVRAVAMSSTDGLVRGMPVVDTGAPITVPVGQPTLGRIFNVLGEPVDQGEPVQAQEFAPIHRSAPPLVDLTIKPEPFETGIKVIDLLAPFKKGGKVGLFGGAGVGKTVLIQELIHNIAEEHSGLSVFAGVGERTREGNDLYNEMKESGVLDKVALVYGQMNEPPGARMRVGLTALTMAEYFRDVNKQDVLLFIDNIFRFVQAGSEVSALLGRMPSAVGYQPTLATEMGNLQERITSTKQGSITSVQAVYVPADDLTDPAPATTFAHLDSTVVLSRSLAAKGIYPAVDPLDSSSTILQADIVGEEHYNTARAVKQTLQRYKELQDIIAILGLDELSEEDKLVVARARRIERFLSQPFFVAEVFTGSPGKYVKLADTIKGFQRILSGELDNLPEQAFYLVGTIEEAIEKAEKLKSK</sequence>
<feature type="chain" id="PRO_0000254407" description="ATP synthase subunit beta">
    <location>
        <begin position="1"/>
        <end position="477"/>
    </location>
</feature>
<feature type="binding site" evidence="1">
    <location>
        <begin position="163"/>
        <end position="170"/>
    </location>
    <ligand>
        <name>ATP</name>
        <dbReference type="ChEBI" id="CHEBI:30616"/>
    </ligand>
</feature>
<keyword id="KW-0066">ATP synthesis</keyword>
<keyword id="KW-0067">ATP-binding</keyword>
<keyword id="KW-0139">CF(1)</keyword>
<keyword id="KW-0375">Hydrogen ion transport</keyword>
<keyword id="KW-0406">Ion transport</keyword>
<keyword id="KW-0472">Membrane</keyword>
<keyword id="KW-0547">Nucleotide-binding</keyword>
<keyword id="KW-1185">Reference proteome</keyword>
<keyword id="KW-0793">Thylakoid</keyword>
<keyword id="KW-1278">Translocase</keyword>
<keyword id="KW-0813">Transport</keyword>
<proteinExistence type="inferred from homology"/>
<evidence type="ECO:0000255" key="1">
    <source>
        <dbReference type="HAMAP-Rule" id="MF_01347"/>
    </source>
</evidence>
<organism>
    <name type="scientific">Synechococcus sp. (strain JA-2-3B'a(2-13))</name>
    <name type="common">Cyanobacteria bacterium Yellowstone B-Prime</name>
    <dbReference type="NCBI Taxonomy" id="321332"/>
    <lineage>
        <taxon>Bacteria</taxon>
        <taxon>Bacillati</taxon>
        <taxon>Cyanobacteriota</taxon>
        <taxon>Cyanophyceae</taxon>
        <taxon>Synechococcales</taxon>
        <taxon>Synechococcaceae</taxon>
        <taxon>Synechococcus</taxon>
    </lineage>
</organism>
<gene>
    <name evidence="1" type="primary">atpD</name>
    <name evidence="1" type="synonym">atpB</name>
    <name type="ordered locus">CYB_2502</name>
</gene>
<name>ATPB_SYNJB</name>
<reference key="1">
    <citation type="journal article" date="2007" name="ISME J.">
        <title>Population level functional diversity in a microbial community revealed by comparative genomic and metagenomic analyses.</title>
        <authorList>
            <person name="Bhaya D."/>
            <person name="Grossman A.R."/>
            <person name="Steunou A.-S."/>
            <person name="Khuri N."/>
            <person name="Cohan F.M."/>
            <person name="Hamamura N."/>
            <person name="Melendrez M.C."/>
            <person name="Bateson M.M."/>
            <person name="Ward D.M."/>
            <person name="Heidelberg J.F."/>
        </authorList>
    </citation>
    <scope>NUCLEOTIDE SEQUENCE [LARGE SCALE GENOMIC DNA]</scope>
    <source>
        <strain>JA-2-3B'a(2-13)</strain>
    </source>
</reference>
<dbReference type="EC" id="7.1.2.2" evidence="1"/>
<dbReference type="EMBL" id="CP000240">
    <property type="protein sequence ID" value="ABD03435.1"/>
    <property type="molecule type" value="Genomic_DNA"/>
</dbReference>
<dbReference type="RefSeq" id="WP_011434062.1">
    <property type="nucleotide sequence ID" value="NC_007776.1"/>
</dbReference>
<dbReference type="SMR" id="Q2JIV9"/>
<dbReference type="STRING" id="321332.CYB_2502"/>
<dbReference type="KEGG" id="cyb:CYB_2502"/>
<dbReference type="eggNOG" id="COG0055">
    <property type="taxonomic scope" value="Bacteria"/>
</dbReference>
<dbReference type="HOGENOM" id="CLU_022398_0_2_3"/>
<dbReference type="OrthoDB" id="9801639at2"/>
<dbReference type="Proteomes" id="UP000001938">
    <property type="component" value="Chromosome"/>
</dbReference>
<dbReference type="GO" id="GO:0031676">
    <property type="term" value="C:plasma membrane-derived thylakoid membrane"/>
    <property type="evidence" value="ECO:0007669"/>
    <property type="project" value="UniProtKB-SubCell"/>
</dbReference>
<dbReference type="GO" id="GO:0045259">
    <property type="term" value="C:proton-transporting ATP synthase complex"/>
    <property type="evidence" value="ECO:0007669"/>
    <property type="project" value="UniProtKB-KW"/>
</dbReference>
<dbReference type="GO" id="GO:0005524">
    <property type="term" value="F:ATP binding"/>
    <property type="evidence" value="ECO:0007669"/>
    <property type="project" value="UniProtKB-UniRule"/>
</dbReference>
<dbReference type="GO" id="GO:0016887">
    <property type="term" value="F:ATP hydrolysis activity"/>
    <property type="evidence" value="ECO:0007669"/>
    <property type="project" value="InterPro"/>
</dbReference>
<dbReference type="GO" id="GO:0046933">
    <property type="term" value="F:proton-transporting ATP synthase activity, rotational mechanism"/>
    <property type="evidence" value="ECO:0007669"/>
    <property type="project" value="UniProtKB-UniRule"/>
</dbReference>
<dbReference type="CDD" id="cd18110">
    <property type="entry name" value="ATP-synt_F1_beta_C"/>
    <property type="match status" value="1"/>
</dbReference>
<dbReference type="CDD" id="cd18115">
    <property type="entry name" value="ATP-synt_F1_beta_N"/>
    <property type="match status" value="1"/>
</dbReference>
<dbReference type="CDD" id="cd01133">
    <property type="entry name" value="F1-ATPase_beta_CD"/>
    <property type="match status" value="1"/>
</dbReference>
<dbReference type="FunFam" id="1.10.1140.10:FF:000001">
    <property type="entry name" value="ATP synthase subunit beta"/>
    <property type="match status" value="1"/>
</dbReference>
<dbReference type="FunFam" id="3.40.50.300:FF:000004">
    <property type="entry name" value="ATP synthase subunit beta"/>
    <property type="match status" value="1"/>
</dbReference>
<dbReference type="FunFam" id="2.40.10.170:FF:000002">
    <property type="entry name" value="ATP synthase subunit beta, chloroplastic"/>
    <property type="match status" value="1"/>
</dbReference>
<dbReference type="Gene3D" id="2.40.10.170">
    <property type="match status" value="1"/>
</dbReference>
<dbReference type="Gene3D" id="1.10.1140.10">
    <property type="entry name" value="Bovine Mitochondrial F1-atpase, Atp Synthase Beta Chain, Chain D, domain 3"/>
    <property type="match status" value="1"/>
</dbReference>
<dbReference type="Gene3D" id="3.40.50.300">
    <property type="entry name" value="P-loop containing nucleotide triphosphate hydrolases"/>
    <property type="match status" value="1"/>
</dbReference>
<dbReference type="HAMAP" id="MF_01347">
    <property type="entry name" value="ATP_synth_beta_bact"/>
    <property type="match status" value="1"/>
</dbReference>
<dbReference type="InterPro" id="IPR003593">
    <property type="entry name" value="AAA+_ATPase"/>
</dbReference>
<dbReference type="InterPro" id="IPR055190">
    <property type="entry name" value="ATP-synt_VA_C"/>
</dbReference>
<dbReference type="InterPro" id="IPR005722">
    <property type="entry name" value="ATP_synth_F1_bsu"/>
</dbReference>
<dbReference type="InterPro" id="IPR020003">
    <property type="entry name" value="ATPase_a/bsu_AS"/>
</dbReference>
<dbReference type="InterPro" id="IPR050053">
    <property type="entry name" value="ATPase_alpha/beta_chains"/>
</dbReference>
<dbReference type="InterPro" id="IPR004100">
    <property type="entry name" value="ATPase_F1/V1/A1_a/bsu_N"/>
</dbReference>
<dbReference type="InterPro" id="IPR036121">
    <property type="entry name" value="ATPase_F1/V1/A1_a/bsu_N_sf"/>
</dbReference>
<dbReference type="InterPro" id="IPR000194">
    <property type="entry name" value="ATPase_F1/V1/A1_a/bsu_nucl-bd"/>
</dbReference>
<dbReference type="InterPro" id="IPR024034">
    <property type="entry name" value="ATPase_F1/V1_b/a_C"/>
</dbReference>
<dbReference type="InterPro" id="IPR027417">
    <property type="entry name" value="P-loop_NTPase"/>
</dbReference>
<dbReference type="NCBIfam" id="TIGR01039">
    <property type="entry name" value="atpD"/>
    <property type="match status" value="1"/>
</dbReference>
<dbReference type="PANTHER" id="PTHR15184">
    <property type="entry name" value="ATP SYNTHASE"/>
    <property type="match status" value="1"/>
</dbReference>
<dbReference type="PANTHER" id="PTHR15184:SF71">
    <property type="entry name" value="ATP SYNTHASE SUBUNIT BETA, MITOCHONDRIAL"/>
    <property type="match status" value="1"/>
</dbReference>
<dbReference type="Pfam" id="PF00006">
    <property type="entry name" value="ATP-synt_ab"/>
    <property type="match status" value="1"/>
</dbReference>
<dbReference type="Pfam" id="PF02874">
    <property type="entry name" value="ATP-synt_ab_N"/>
    <property type="match status" value="1"/>
</dbReference>
<dbReference type="Pfam" id="PF22919">
    <property type="entry name" value="ATP-synt_VA_C"/>
    <property type="match status" value="1"/>
</dbReference>
<dbReference type="SMART" id="SM00382">
    <property type="entry name" value="AAA"/>
    <property type="match status" value="1"/>
</dbReference>
<dbReference type="SUPFAM" id="SSF47917">
    <property type="entry name" value="C-terminal domain of alpha and beta subunits of F1 ATP synthase"/>
    <property type="match status" value="1"/>
</dbReference>
<dbReference type="SUPFAM" id="SSF50615">
    <property type="entry name" value="N-terminal domain of alpha and beta subunits of F1 ATP synthase"/>
    <property type="match status" value="1"/>
</dbReference>
<dbReference type="SUPFAM" id="SSF52540">
    <property type="entry name" value="P-loop containing nucleoside triphosphate hydrolases"/>
    <property type="match status" value="1"/>
</dbReference>
<dbReference type="PROSITE" id="PS00152">
    <property type="entry name" value="ATPASE_ALPHA_BETA"/>
    <property type="match status" value="1"/>
</dbReference>